<accession>A4R0T9</accession>
<accession>G4MQM5</accession>
<dbReference type="EMBL" id="CM001231">
    <property type="protein sequence ID" value="EHA57312.1"/>
    <property type="molecule type" value="Genomic_DNA"/>
</dbReference>
<dbReference type="RefSeq" id="XP_003709924.1">
    <property type="nucleotide sequence ID" value="XM_003709876.1"/>
</dbReference>
<dbReference type="STRING" id="242507.A4R0T9"/>
<dbReference type="EnsemblFungi" id="MGG_16274T0">
    <property type="protein sequence ID" value="MGG_16274T0"/>
    <property type="gene ID" value="MGG_16274"/>
</dbReference>
<dbReference type="KEGG" id="mgr:MGG_16274"/>
<dbReference type="VEuPathDB" id="FungiDB:MGG_16274"/>
<dbReference type="eggNOG" id="KOG2809">
    <property type="taxonomic scope" value="Eukaryota"/>
</dbReference>
<dbReference type="HOGENOM" id="CLU_052839_0_0_1"/>
<dbReference type="InParanoid" id="A4R0T9"/>
<dbReference type="OMA" id="PCWDQSS"/>
<dbReference type="OrthoDB" id="29523at2759"/>
<dbReference type="Proteomes" id="UP000009058">
    <property type="component" value="Chromosome 1"/>
</dbReference>
<dbReference type="GO" id="GO:0005730">
    <property type="term" value="C:nucleolus"/>
    <property type="evidence" value="ECO:0007669"/>
    <property type="project" value="UniProtKB-SubCell"/>
</dbReference>
<dbReference type="GO" id="GO:0003676">
    <property type="term" value="F:nucleic acid binding"/>
    <property type="evidence" value="ECO:0007669"/>
    <property type="project" value="InterPro"/>
</dbReference>
<dbReference type="GO" id="GO:0006364">
    <property type="term" value="P:rRNA processing"/>
    <property type="evidence" value="ECO:0007669"/>
    <property type="project" value="UniProtKB-KW"/>
</dbReference>
<dbReference type="InterPro" id="IPR000467">
    <property type="entry name" value="G_patch_dom"/>
</dbReference>
<dbReference type="InterPro" id="IPR050656">
    <property type="entry name" value="PINX1"/>
</dbReference>
<dbReference type="PANTHER" id="PTHR23149">
    <property type="entry name" value="G PATCH DOMAIN CONTAINING PROTEIN"/>
    <property type="match status" value="1"/>
</dbReference>
<dbReference type="PANTHER" id="PTHR23149:SF31">
    <property type="entry name" value="PROTEIN PXR1"/>
    <property type="match status" value="1"/>
</dbReference>
<dbReference type="Pfam" id="PF01585">
    <property type="entry name" value="G-patch"/>
    <property type="match status" value="1"/>
</dbReference>
<dbReference type="SMART" id="SM00443">
    <property type="entry name" value="G_patch"/>
    <property type="match status" value="1"/>
</dbReference>
<dbReference type="PROSITE" id="PS50174">
    <property type="entry name" value="G_PATCH"/>
    <property type="match status" value="1"/>
</dbReference>
<evidence type="ECO:0000250" key="1"/>
<evidence type="ECO:0000255" key="2">
    <source>
        <dbReference type="PROSITE-ProRule" id="PRU00092"/>
    </source>
</evidence>
<evidence type="ECO:0000256" key="3">
    <source>
        <dbReference type="SAM" id="MobiDB-lite"/>
    </source>
</evidence>
<evidence type="ECO:0000305" key="4"/>
<keyword id="KW-0539">Nucleus</keyword>
<keyword id="KW-1185">Reference proteome</keyword>
<keyword id="KW-0690">Ribosome biogenesis</keyword>
<keyword id="KW-0698">rRNA processing</keyword>
<protein>
    <recommendedName>
        <fullName>Protein PXR1</fullName>
    </recommendedName>
    <alternativeName>
        <fullName>PinX1-related protein 1</fullName>
    </alternativeName>
</protein>
<gene>
    <name type="primary">PXR1</name>
    <name type="ORF">MGG_09279</name>
</gene>
<proteinExistence type="inferred from homology"/>
<reference key="1">
    <citation type="journal article" date="2005" name="Nature">
        <title>The genome sequence of the rice blast fungus Magnaporthe grisea.</title>
        <authorList>
            <person name="Dean R.A."/>
            <person name="Talbot N.J."/>
            <person name="Ebbole D.J."/>
            <person name="Farman M.L."/>
            <person name="Mitchell T.K."/>
            <person name="Orbach M.J."/>
            <person name="Thon M.R."/>
            <person name="Kulkarni R."/>
            <person name="Xu J.-R."/>
            <person name="Pan H."/>
            <person name="Read N.D."/>
            <person name="Lee Y.-H."/>
            <person name="Carbone I."/>
            <person name="Brown D."/>
            <person name="Oh Y.Y."/>
            <person name="Donofrio N."/>
            <person name="Jeong J.S."/>
            <person name="Soanes D.M."/>
            <person name="Djonovic S."/>
            <person name="Kolomiets E."/>
            <person name="Rehmeyer C."/>
            <person name="Li W."/>
            <person name="Harding M."/>
            <person name="Kim S."/>
            <person name="Lebrun M.-H."/>
            <person name="Bohnert H."/>
            <person name="Coughlan S."/>
            <person name="Butler J."/>
            <person name="Calvo S.E."/>
            <person name="Ma L.-J."/>
            <person name="Nicol R."/>
            <person name="Purcell S."/>
            <person name="Nusbaum C."/>
            <person name="Galagan J.E."/>
            <person name="Birren B.W."/>
        </authorList>
    </citation>
    <scope>NUCLEOTIDE SEQUENCE [LARGE SCALE GENOMIC DNA]</scope>
    <source>
        <strain>70-15 / ATCC MYA-4617 / FGSC 8958</strain>
    </source>
</reference>
<feature type="chain" id="PRO_0000324891" description="Protein PXR1">
    <location>
        <begin position="1"/>
        <end position="346"/>
    </location>
</feature>
<feature type="domain" description="G-patch" evidence="2">
    <location>
        <begin position="25"/>
        <end position="79"/>
    </location>
</feature>
<feature type="region of interest" description="Disordered" evidence="3">
    <location>
        <begin position="1"/>
        <end position="27"/>
    </location>
</feature>
<feature type="region of interest" description="Disordered" evidence="3">
    <location>
        <begin position="146"/>
        <end position="315"/>
    </location>
</feature>
<feature type="compositionally biased region" description="Polar residues" evidence="3">
    <location>
        <begin position="15"/>
        <end position="27"/>
    </location>
</feature>
<feature type="compositionally biased region" description="Basic residues" evidence="3">
    <location>
        <begin position="215"/>
        <end position="230"/>
    </location>
</feature>
<feature type="compositionally biased region" description="Acidic residues" evidence="3">
    <location>
        <begin position="235"/>
        <end position="245"/>
    </location>
</feature>
<feature type="compositionally biased region" description="Basic residues" evidence="3">
    <location>
        <begin position="249"/>
        <end position="274"/>
    </location>
</feature>
<feature type="compositionally biased region" description="Polar residues" evidence="3">
    <location>
        <begin position="293"/>
        <end position="314"/>
    </location>
</feature>
<name>PXR1_PYRO7</name>
<organism>
    <name type="scientific">Pyricularia oryzae (strain 70-15 / ATCC MYA-4617 / FGSC 8958)</name>
    <name type="common">Rice blast fungus</name>
    <name type="synonym">Magnaporthe oryzae</name>
    <dbReference type="NCBI Taxonomy" id="242507"/>
    <lineage>
        <taxon>Eukaryota</taxon>
        <taxon>Fungi</taxon>
        <taxon>Dikarya</taxon>
        <taxon>Ascomycota</taxon>
        <taxon>Pezizomycotina</taxon>
        <taxon>Sordariomycetes</taxon>
        <taxon>Sordariomycetidae</taxon>
        <taxon>Magnaporthales</taxon>
        <taxon>Pyriculariaceae</taxon>
        <taxon>Pyricularia</taxon>
    </lineage>
</organism>
<comment type="function">
    <text evidence="1">Involved in rRNA-processing at A0, A1 and A2 sites and negatively regulates telomerase.</text>
</comment>
<comment type="subcellular location">
    <subcellularLocation>
        <location evidence="1">Nucleus</location>
        <location evidence="1">Nucleolus</location>
    </subcellularLocation>
</comment>
<comment type="similarity">
    <text evidence="4">Belongs to the PINX1 family.</text>
</comment>
<sequence>MGLAAPKNKRKLGNDPNNTRWSRNTENFGHRMLRSQGWEPGQYLGPQDASHAVYHTAASASHIKVALKEDNLGLGAKMNRGDECTGLNAFKEMLARLNGKSEAAIEKDKKAREAHAMNVYVERKFGTMRFVSGGFLVGDVIQEKKEDAEAESTDGTPEPAEATVKKEKKRKAGRDDDDEAQSKEERRRAKKQKKSMKETGSGGDDVTSEEDSAKSKSKKSHKSKKEKKRRKEEPASDEQESEDEESREKRRKKEKKERKERRREKREKKLKKKQQREEDSSSSEANSDDETTGVDTGASTPVASGTSTPVSQVSVRHLARRRFIAQKRMAMKDQQALNQIFMIKSS</sequence>